<dbReference type="EC" id="2.3.1.225"/>
<dbReference type="EMBL" id="CR382131">
    <property type="protein sequence ID" value="CAG79896.1"/>
    <property type="molecule type" value="Genomic_DNA"/>
</dbReference>
<dbReference type="RefSeq" id="XP_504297.1">
    <property type="nucleotide sequence ID" value="XM_504297.1"/>
</dbReference>
<dbReference type="SMR" id="Q6C4W5"/>
<dbReference type="FunCoup" id="Q6C4W5">
    <property type="interactions" value="454"/>
</dbReference>
<dbReference type="STRING" id="284591.Q6C4W5"/>
<dbReference type="EnsemblFungi" id="CAG79896">
    <property type="protein sequence ID" value="CAG79896"/>
    <property type="gene ID" value="YALI0_E23177g"/>
</dbReference>
<dbReference type="KEGG" id="yli:2912928"/>
<dbReference type="VEuPathDB" id="FungiDB:YALI0_E23177g"/>
<dbReference type="HOGENOM" id="CLU_027721_0_0_1"/>
<dbReference type="InParanoid" id="Q6C4W5"/>
<dbReference type="OrthoDB" id="52260at4891"/>
<dbReference type="Proteomes" id="UP000001300">
    <property type="component" value="Chromosome E"/>
</dbReference>
<dbReference type="GO" id="GO:0005783">
    <property type="term" value="C:endoplasmic reticulum"/>
    <property type="evidence" value="ECO:0000318"/>
    <property type="project" value="GO_Central"/>
</dbReference>
<dbReference type="GO" id="GO:0005794">
    <property type="term" value="C:Golgi apparatus"/>
    <property type="evidence" value="ECO:0000318"/>
    <property type="project" value="GO_Central"/>
</dbReference>
<dbReference type="GO" id="GO:0005774">
    <property type="term" value="C:vacuolar membrane"/>
    <property type="evidence" value="ECO:0007669"/>
    <property type="project" value="UniProtKB-SubCell"/>
</dbReference>
<dbReference type="GO" id="GO:0019706">
    <property type="term" value="F:protein-cysteine S-palmitoyltransferase activity"/>
    <property type="evidence" value="ECO:0000318"/>
    <property type="project" value="GO_Central"/>
</dbReference>
<dbReference type="GO" id="GO:0006612">
    <property type="term" value="P:protein targeting to membrane"/>
    <property type="evidence" value="ECO:0000318"/>
    <property type="project" value="GO_Central"/>
</dbReference>
<dbReference type="InterPro" id="IPR001594">
    <property type="entry name" value="Palmitoyltrfase_DHHC"/>
</dbReference>
<dbReference type="InterPro" id="IPR039859">
    <property type="entry name" value="PFA4/ZDH16/20/ERF2-like"/>
</dbReference>
<dbReference type="PANTHER" id="PTHR12246">
    <property type="entry name" value="PALMITOYLTRANSFERASE ZDHHC16"/>
    <property type="match status" value="1"/>
</dbReference>
<dbReference type="Pfam" id="PF01529">
    <property type="entry name" value="DHHC"/>
    <property type="match status" value="1"/>
</dbReference>
<dbReference type="PROSITE" id="PS50216">
    <property type="entry name" value="DHHC"/>
    <property type="match status" value="1"/>
</dbReference>
<sequence>MQCRKCCFACEKWCFIGAKAFLPLVVNFLIIWACWVHAWLVCWEPQLFESDTTFWRVYGVAGVAIGIMCNVLYLKVCKVGPGSPTDIDNFSVPLVEYQNACSAEGQHLTPPREMANSVCAKENGGLRFCTKCIGWKPDRSHHCSNYKRCVLKFDHYCPWFATAIGFHNHKYFVLFLWYVTILCFFCLGSTGFVFYNHILEIGAMRGPDGNTDYVGAISVNVMILMVLALVFAIAVGTFATFSLYLVFNNQSTVEFLESTQYRSAVPTAAYRYTFAPTSKTVGNVFDVGWKRNFQLVMGDKWWMWLLPIQPSEAARGNGTQFPLNKQVLQKIREAAAKEVQIRDQNQAYIKQQRQQQQKRTQYDLPQHLQPPPQEHYEYDDEAQDSGDDIPLINMVNKNNTK</sequence>
<evidence type="ECO:0000250" key="1"/>
<evidence type="ECO:0000255" key="2"/>
<evidence type="ECO:0000255" key="3">
    <source>
        <dbReference type="PROSITE-ProRule" id="PRU00067"/>
    </source>
</evidence>
<evidence type="ECO:0000256" key="4">
    <source>
        <dbReference type="SAM" id="MobiDB-lite"/>
    </source>
</evidence>
<evidence type="ECO:0000305" key="5"/>
<protein>
    <recommendedName>
        <fullName>Palmitoyltransferase PFA3</fullName>
        <ecNumber>2.3.1.225</ecNumber>
    </recommendedName>
    <alternativeName>
        <fullName>Protein fatty acyltransferase 3</fullName>
    </alternativeName>
</protein>
<comment type="function">
    <text evidence="1">Palmitoyltransferase specific for VAC8. Palmitoylates VAC8 at one or more of its N-terminal cysteine residues, which is required for its proper membrane localization (By similarity).</text>
</comment>
<comment type="catalytic activity">
    <reaction>
        <text>L-cysteinyl-[protein] + hexadecanoyl-CoA = S-hexadecanoyl-L-cysteinyl-[protein] + CoA</text>
        <dbReference type="Rhea" id="RHEA:36683"/>
        <dbReference type="Rhea" id="RHEA-COMP:10131"/>
        <dbReference type="Rhea" id="RHEA-COMP:11032"/>
        <dbReference type="ChEBI" id="CHEBI:29950"/>
        <dbReference type="ChEBI" id="CHEBI:57287"/>
        <dbReference type="ChEBI" id="CHEBI:57379"/>
        <dbReference type="ChEBI" id="CHEBI:74151"/>
        <dbReference type="EC" id="2.3.1.225"/>
    </reaction>
</comment>
<comment type="subcellular location">
    <subcellularLocation>
        <location evidence="1">Vacuole membrane</location>
        <topology evidence="1">Multi-pass membrane protein</topology>
    </subcellularLocation>
</comment>
<comment type="domain">
    <text evidence="1">The DHHC domain is required for palmitoyltransferase activity.</text>
</comment>
<comment type="similarity">
    <text evidence="5">Belongs to the DHHC palmitoyltransferase family. PFA3 subfamily.</text>
</comment>
<name>PFA3_YARLI</name>
<feature type="chain" id="PRO_0000212958" description="Palmitoyltransferase PFA3">
    <location>
        <begin position="1"/>
        <end position="401"/>
    </location>
</feature>
<feature type="topological domain" description="Cytoplasmic" evidence="2">
    <location>
        <begin position="1"/>
        <end position="20"/>
    </location>
</feature>
<feature type="transmembrane region" description="Helical" evidence="2">
    <location>
        <begin position="21"/>
        <end position="41"/>
    </location>
</feature>
<feature type="topological domain" description="Lumenal" evidence="2">
    <location>
        <begin position="42"/>
        <end position="56"/>
    </location>
</feature>
<feature type="transmembrane region" description="Helical" evidence="2">
    <location>
        <begin position="57"/>
        <end position="77"/>
    </location>
</feature>
<feature type="topological domain" description="Cytoplasmic" evidence="2">
    <location>
        <begin position="78"/>
        <end position="171"/>
    </location>
</feature>
<feature type="transmembrane region" description="Helical" evidence="2">
    <location>
        <begin position="172"/>
        <end position="192"/>
    </location>
</feature>
<feature type="topological domain" description="Lumenal" evidence="2">
    <location>
        <begin position="193"/>
        <end position="220"/>
    </location>
</feature>
<feature type="transmembrane region" description="Helical" evidence="2">
    <location>
        <begin position="221"/>
        <end position="241"/>
    </location>
</feature>
<feature type="topological domain" description="Cytoplasmic" evidence="2">
    <location>
        <begin position="242"/>
        <end position="401"/>
    </location>
</feature>
<feature type="domain" description="DHHC" evidence="3">
    <location>
        <begin position="127"/>
        <end position="177"/>
    </location>
</feature>
<feature type="region of interest" description="Disordered" evidence="4">
    <location>
        <begin position="351"/>
        <end position="401"/>
    </location>
</feature>
<feature type="compositionally biased region" description="Low complexity" evidence="4">
    <location>
        <begin position="351"/>
        <end position="367"/>
    </location>
</feature>
<feature type="compositionally biased region" description="Acidic residues" evidence="4">
    <location>
        <begin position="377"/>
        <end position="387"/>
    </location>
</feature>
<feature type="active site" description="S-palmitoyl cysteine intermediate" evidence="1">
    <location>
        <position position="157"/>
    </location>
</feature>
<reference key="1">
    <citation type="journal article" date="2004" name="Nature">
        <title>Genome evolution in yeasts.</title>
        <authorList>
            <person name="Dujon B."/>
            <person name="Sherman D."/>
            <person name="Fischer G."/>
            <person name="Durrens P."/>
            <person name="Casaregola S."/>
            <person name="Lafontaine I."/>
            <person name="de Montigny J."/>
            <person name="Marck C."/>
            <person name="Neuveglise C."/>
            <person name="Talla E."/>
            <person name="Goffard N."/>
            <person name="Frangeul L."/>
            <person name="Aigle M."/>
            <person name="Anthouard V."/>
            <person name="Babour A."/>
            <person name="Barbe V."/>
            <person name="Barnay S."/>
            <person name="Blanchin S."/>
            <person name="Beckerich J.-M."/>
            <person name="Beyne E."/>
            <person name="Bleykasten C."/>
            <person name="Boisrame A."/>
            <person name="Boyer J."/>
            <person name="Cattolico L."/>
            <person name="Confanioleri F."/>
            <person name="de Daruvar A."/>
            <person name="Despons L."/>
            <person name="Fabre E."/>
            <person name="Fairhead C."/>
            <person name="Ferry-Dumazet H."/>
            <person name="Groppi A."/>
            <person name="Hantraye F."/>
            <person name="Hennequin C."/>
            <person name="Jauniaux N."/>
            <person name="Joyet P."/>
            <person name="Kachouri R."/>
            <person name="Kerrest A."/>
            <person name="Koszul R."/>
            <person name="Lemaire M."/>
            <person name="Lesur I."/>
            <person name="Ma L."/>
            <person name="Muller H."/>
            <person name="Nicaud J.-M."/>
            <person name="Nikolski M."/>
            <person name="Oztas S."/>
            <person name="Ozier-Kalogeropoulos O."/>
            <person name="Pellenz S."/>
            <person name="Potier S."/>
            <person name="Richard G.-F."/>
            <person name="Straub M.-L."/>
            <person name="Suleau A."/>
            <person name="Swennen D."/>
            <person name="Tekaia F."/>
            <person name="Wesolowski-Louvel M."/>
            <person name="Westhof E."/>
            <person name="Wirth B."/>
            <person name="Zeniou-Meyer M."/>
            <person name="Zivanovic Y."/>
            <person name="Bolotin-Fukuhara M."/>
            <person name="Thierry A."/>
            <person name="Bouchier C."/>
            <person name="Caudron B."/>
            <person name="Scarpelli C."/>
            <person name="Gaillardin C."/>
            <person name="Weissenbach J."/>
            <person name="Wincker P."/>
            <person name="Souciet J.-L."/>
        </authorList>
    </citation>
    <scope>NUCLEOTIDE SEQUENCE [LARGE SCALE GENOMIC DNA]</scope>
    <source>
        <strain>CLIB 122 / E 150</strain>
    </source>
</reference>
<proteinExistence type="inferred from homology"/>
<keyword id="KW-0012">Acyltransferase</keyword>
<keyword id="KW-0449">Lipoprotein</keyword>
<keyword id="KW-0472">Membrane</keyword>
<keyword id="KW-0564">Palmitate</keyword>
<keyword id="KW-1185">Reference proteome</keyword>
<keyword id="KW-0808">Transferase</keyword>
<keyword id="KW-0812">Transmembrane</keyword>
<keyword id="KW-1133">Transmembrane helix</keyword>
<keyword id="KW-0926">Vacuole</keyword>
<accession>Q6C4W5</accession>
<gene>
    <name type="primary">PFA3</name>
    <name type="ordered locus">YALI0E23177g</name>
</gene>
<organism>
    <name type="scientific">Yarrowia lipolytica (strain CLIB 122 / E 150)</name>
    <name type="common">Yeast</name>
    <name type="synonym">Candida lipolytica</name>
    <dbReference type="NCBI Taxonomy" id="284591"/>
    <lineage>
        <taxon>Eukaryota</taxon>
        <taxon>Fungi</taxon>
        <taxon>Dikarya</taxon>
        <taxon>Ascomycota</taxon>
        <taxon>Saccharomycotina</taxon>
        <taxon>Dipodascomycetes</taxon>
        <taxon>Dipodascales</taxon>
        <taxon>Dipodascales incertae sedis</taxon>
        <taxon>Yarrowia</taxon>
    </lineage>
</organism>